<proteinExistence type="inferred from homology"/>
<protein>
    <recommendedName>
        <fullName evidence="1">Large ribosomal subunit protein uL24</fullName>
    </recommendedName>
    <alternativeName>
        <fullName evidence="2">50S ribosomal protein L24</fullName>
    </alternativeName>
</protein>
<accession>Q2RFQ8</accession>
<reference key="1">
    <citation type="journal article" date="2008" name="Environ. Microbiol.">
        <title>The complete genome sequence of Moorella thermoacetica (f. Clostridium thermoaceticum).</title>
        <authorList>
            <person name="Pierce E."/>
            <person name="Xie G."/>
            <person name="Barabote R.D."/>
            <person name="Saunders E."/>
            <person name="Han C.S."/>
            <person name="Detter J.C."/>
            <person name="Richardson P."/>
            <person name="Brettin T.S."/>
            <person name="Das A."/>
            <person name="Ljungdahl L.G."/>
            <person name="Ragsdale S.W."/>
        </authorList>
    </citation>
    <scope>NUCLEOTIDE SEQUENCE [LARGE SCALE GENOMIC DNA]</scope>
    <source>
        <strain>ATCC 39073 / JCM 9320</strain>
    </source>
</reference>
<feature type="chain" id="PRO_0000241619" description="Large ribosomal subunit protein uL24">
    <location>
        <begin position="1"/>
        <end position="108"/>
    </location>
</feature>
<name>RL24_MOOTA</name>
<dbReference type="EMBL" id="CP000232">
    <property type="protein sequence ID" value="ABC20731.1"/>
    <property type="molecule type" value="Genomic_DNA"/>
</dbReference>
<dbReference type="RefSeq" id="YP_431274.1">
    <property type="nucleotide sequence ID" value="NC_007644.1"/>
</dbReference>
<dbReference type="SMR" id="Q2RFQ8"/>
<dbReference type="STRING" id="264732.Moth_2449"/>
<dbReference type="EnsemblBacteria" id="ABC20731">
    <property type="protein sequence ID" value="ABC20731"/>
    <property type="gene ID" value="Moth_2449"/>
</dbReference>
<dbReference type="KEGG" id="mta:Moth_2449"/>
<dbReference type="PATRIC" id="fig|264732.11.peg.2667"/>
<dbReference type="eggNOG" id="COG0198">
    <property type="taxonomic scope" value="Bacteria"/>
</dbReference>
<dbReference type="HOGENOM" id="CLU_093315_2_3_9"/>
<dbReference type="OrthoDB" id="9807419at2"/>
<dbReference type="GO" id="GO:1990904">
    <property type="term" value="C:ribonucleoprotein complex"/>
    <property type="evidence" value="ECO:0007669"/>
    <property type="project" value="UniProtKB-KW"/>
</dbReference>
<dbReference type="GO" id="GO:0005840">
    <property type="term" value="C:ribosome"/>
    <property type="evidence" value="ECO:0007669"/>
    <property type="project" value="UniProtKB-KW"/>
</dbReference>
<dbReference type="GO" id="GO:0019843">
    <property type="term" value="F:rRNA binding"/>
    <property type="evidence" value="ECO:0007669"/>
    <property type="project" value="UniProtKB-UniRule"/>
</dbReference>
<dbReference type="GO" id="GO:0003735">
    <property type="term" value="F:structural constituent of ribosome"/>
    <property type="evidence" value="ECO:0007669"/>
    <property type="project" value="InterPro"/>
</dbReference>
<dbReference type="GO" id="GO:0006412">
    <property type="term" value="P:translation"/>
    <property type="evidence" value="ECO:0007669"/>
    <property type="project" value="UniProtKB-UniRule"/>
</dbReference>
<dbReference type="CDD" id="cd06089">
    <property type="entry name" value="KOW_RPL26"/>
    <property type="match status" value="1"/>
</dbReference>
<dbReference type="FunFam" id="2.30.30.30:FF:000004">
    <property type="entry name" value="50S ribosomal protein L24"/>
    <property type="match status" value="1"/>
</dbReference>
<dbReference type="Gene3D" id="2.30.30.30">
    <property type="match status" value="1"/>
</dbReference>
<dbReference type="HAMAP" id="MF_01326_B">
    <property type="entry name" value="Ribosomal_uL24_B"/>
    <property type="match status" value="1"/>
</dbReference>
<dbReference type="InterPro" id="IPR005824">
    <property type="entry name" value="KOW"/>
</dbReference>
<dbReference type="InterPro" id="IPR014722">
    <property type="entry name" value="Rib_uL2_dom2"/>
</dbReference>
<dbReference type="InterPro" id="IPR003256">
    <property type="entry name" value="Ribosomal_uL24"/>
</dbReference>
<dbReference type="InterPro" id="IPR005825">
    <property type="entry name" value="Ribosomal_uL24_CS"/>
</dbReference>
<dbReference type="InterPro" id="IPR041988">
    <property type="entry name" value="Ribosomal_uL24_KOW"/>
</dbReference>
<dbReference type="InterPro" id="IPR008991">
    <property type="entry name" value="Translation_prot_SH3-like_sf"/>
</dbReference>
<dbReference type="NCBIfam" id="TIGR01079">
    <property type="entry name" value="rplX_bact"/>
    <property type="match status" value="1"/>
</dbReference>
<dbReference type="PANTHER" id="PTHR12903">
    <property type="entry name" value="MITOCHONDRIAL RIBOSOMAL PROTEIN L24"/>
    <property type="match status" value="1"/>
</dbReference>
<dbReference type="Pfam" id="PF00467">
    <property type="entry name" value="KOW"/>
    <property type="match status" value="1"/>
</dbReference>
<dbReference type="Pfam" id="PF17136">
    <property type="entry name" value="ribosomal_L24"/>
    <property type="match status" value="1"/>
</dbReference>
<dbReference type="SMART" id="SM00739">
    <property type="entry name" value="KOW"/>
    <property type="match status" value="1"/>
</dbReference>
<dbReference type="SUPFAM" id="SSF50104">
    <property type="entry name" value="Translation proteins SH3-like domain"/>
    <property type="match status" value="1"/>
</dbReference>
<dbReference type="PROSITE" id="PS01108">
    <property type="entry name" value="RIBOSOMAL_L24"/>
    <property type="match status" value="1"/>
</dbReference>
<keyword id="KW-0687">Ribonucleoprotein</keyword>
<keyword id="KW-0689">Ribosomal protein</keyword>
<keyword id="KW-0694">RNA-binding</keyword>
<keyword id="KW-0699">rRNA-binding</keyword>
<evidence type="ECO:0000255" key="1">
    <source>
        <dbReference type="HAMAP-Rule" id="MF_01326"/>
    </source>
</evidence>
<evidence type="ECO:0000305" key="2"/>
<organism>
    <name type="scientific">Moorella thermoacetica (strain ATCC 39073 / JCM 9320)</name>
    <dbReference type="NCBI Taxonomy" id="264732"/>
    <lineage>
        <taxon>Bacteria</taxon>
        <taxon>Bacillati</taxon>
        <taxon>Bacillota</taxon>
        <taxon>Clostridia</taxon>
        <taxon>Moorellales</taxon>
        <taxon>Moorellaceae</taxon>
        <taxon>Moorella</taxon>
    </lineage>
</organism>
<gene>
    <name evidence="1" type="primary">rplX</name>
    <name type="ordered locus">Moth_2449</name>
</gene>
<comment type="function">
    <text evidence="1">One of two assembly initiator proteins, it binds directly to the 5'-end of the 23S rRNA, where it nucleates assembly of the 50S subunit.</text>
</comment>
<comment type="function">
    <text evidence="1">One of the proteins that surrounds the polypeptide exit tunnel on the outside of the subunit.</text>
</comment>
<comment type="subunit">
    <text evidence="1">Part of the 50S ribosomal subunit.</text>
</comment>
<comment type="similarity">
    <text evidence="1">Belongs to the universal ribosomal protein uL24 family.</text>
</comment>
<sequence length="108" mass="11721">MATPRVHVKKGDTVMVITGKDAGKKGKVLSVEPARGRVVVEGVNIVKRHTRPTQKMPQGGIIEKEAPVASSNVMLFCNKCNRPTRIGRQILADGTKTRVCKKCGEVID</sequence>